<name>ECC1A_MYCTU</name>
<dbReference type="EMBL" id="AL123456">
    <property type="protein sequence ID" value="CCP46699.1"/>
    <property type="molecule type" value="Genomic_DNA"/>
</dbReference>
<dbReference type="PIR" id="D70802">
    <property type="entry name" value="D70802"/>
</dbReference>
<dbReference type="RefSeq" id="NP_218387.1">
    <property type="nucleotide sequence ID" value="NC_000962.3"/>
</dbReference>
<dbReference type="RefSeq" id="WP_003899738.1">
    <property type="nucleotide sequence ID" value="NZ_NVQJ01000074.1"/>
</dbReference>
<dbReference type="SMR" id="P9WNB3"/>
<dbReference type="FunCoup" id="P9WNB3">
    <property type="interactions" value="2"/>
</dbReference>
<dbReference type="IntAct" id="P9WNB3">
    <property type="interactions" value="1"/>
</dbReference>
<dbReference type="STRING" id="83332.Rv3870"/>
<dbReference type="PaxDb" id="83332-Rv3870"/>
<dbReference type="DNASU" id="886204"/>
<dbReference type="GeneID" id="45427874"/>
<dbReference type="GeneID" id="886204"/>
<dbReference type="KEGG" id="mtu:Rv3870"/>
<dbReference type="KEGG" id="mtv:RVBD_3870"/>
<dbReference type="TubercuList" id="Rv3870"/>
<dbReference type="eggNOG" id="COG1674">
    <property type="taxonomic scope" value="Bacteria"/>
</dbReference>
<dbReference type="InParanoid" id="P9WNB3"/>
<dbReference type="OrthoDB" id="9807790at2"/>
<dbReference type="PhylomeDB" id="P9WNB3"/>
<dbReference type="Proteomes" id="UP000001584">
    <property type="component" value="Chromosome"/>
</dbReference>
<dbReference type="GO" id="GO:0009274">
    <property type="term" value="C:peptidoglycan-based cell wall"/>
    <property type="evidence" value="ECO:0007005"/>
    <property type="project" value="MTBBASE"/>
</dbReference>
<dbReference type="GO" id="GO:0005886">
    <property type="term" value="C:plasma membrane"/>
    <property type="evidence" value="ECO:0007005"/>
    <property type="project" value="MTBBASE"/>
</dbReference>
<dbReference type="GO" id="GO:0005524">
    <property type="term" value="F:ATP binding"/>
    <property type="evidence" value="ECO:0007669"/>
    <property type="project" value="UniProtKB-KW"/>
</dbReference>
<dbReference type="GO" id="GO:0003677">
    <property type="term" value="F:DNA binding"/>
    <property type="evidence" value="ECO:0007669"/>
    <property type="project" value="InterPro"/>
</dbReference>
<dbReference type="GO" id="GO:0051701">
    <property type="term" value="P:biological process involved in interaction with host"/>
    <property type="evidence" value="ECO:0000315"/>
    <property type="project" value="MTBBASE"/>
</dbReference>
<dbReference type="GO" id="GO:0044315">
    <property type="term" value="P:protein secretion by the type VII secretion system"/>
    <property type="evidence" value="ECO:0000315"/>
    <property type="project" value="MTBBASE"/>
</dbReference>
<dbReference type="GO" id="GO:0042783">
    <property type="term" value="P:symbiont-mediated evasion of host immune response"/>
    <property type="evidence" value="ECO:0000315"/>
    <property type="project" value="MTBBASE"/>
</dbReference>
<dbReference type="CDD" id="cd01127">
    <property type="entry name" value="TrwB_TraG_TraD_VirD4"/>
    <property type="match status" value="1"/>
</dbReference>
<dbReference type="FunFam" id="3.40.50.300:FF:001572">
    <property type="entry name" value="ESX-1 secretion system protein eccCa1"/>
    <property type="match status" value="1"/>
</dbReference>
<dbReference type="Gene3D" id="3.40.50.300">
    <property type="entry name" value="P-loop containing nucleotide triphosphate hydrolases"/>
    <property type="match status" value="1"/>
</dbReference>
<dbReference type="InterPro" id="IPR023836">
    <property type="entry name" value="EccCa-like_Actinobacteria"/>
</dbReference>
<dbReference type="InterPro" id="IPR050206">
    <property type="entry name" value="FtsK/SpoIIIE/SftA"/>
</dbReference>
<dbReference type="InterPro" id="IPR002543">
    <property type="entry name" value="FtsK_dom"/>
</dbReference>
<dbReference type="InterPro" id="IPR027417">
    <property type="entry name" value="P-loop_NTPase"/>
</dbReference>
<dbReference type="NCBIfam" id="TIGR03924">
    <property type="entry name" value="T7SS_EccC_a"/>
    <property type="match status" value="1"/>
</dbReference>
<dbReference type="PANTHER" id="PTHR22683">
    <property type="entry name" value="SPORULATION PROTEIN RELATED"/>
    <property type="match status" value="1"/>
</dbReference>
<dbReference type="PANTHER" id="PTHR22683:SF1">
    <property type="entry name" value="TYPE VII SECRETION SYSTEM PROTEIN ESSC"/>
    <property type="match status" value="1"/>
</dbReference>
<dbReference type="Pfam" id="PF01580">
    <property type="entry name" value="FtsK_SpoIIIE"/>
    <property type="match status" value="1"/>
</dbReference>
<dbReference type="SUPFAM" id="SSF52540">
    <property type="entry name" value="P-loop containing nucleoside triphosphate hydrolases"/>
    <property type="match status" value="1"/>
</dbReference>
<dbReference type="PROSITE" id="PS50901">
    <property type="entry name" value="FTSK"/>
    <property type="match status" value="1"/>
</dbReference>
<organism>
    <name type="scientific">Mycobacterium tuberculosis (strain ATCC 25618 / H37Rv)</name>
    <dbReference type="NCBI Taxonomy" id="83332"/>
    <lineage>
        <taxon>Bacteria</taxon>
        <taxon>Bacillati</taxon>
        <taxon>Actinomycetota</taxon>
        <taxon>Actinomycetes</taxon>
        <taxon>Mycobacteriales</taxon>
        <taxon>Mycobacteriaceae</taxon>
        <taxon>Mycobacterium</taxon>
        <taxon>Mycobacterium tuberculosis complex</taxon>
    </lineage>
</organism>
<protein>
    <recommendedName>
        <fullName evidence="10">ESX-1 secretion system protein EccCa1</fullName>
    </recommendedName>
    <alternativeName>
        <fullName evidence="9">ESX conserved component Ca1</fullName>
    </alternativeName>
    <alternativeName>
        <fullName evidence="8">Snm1 secretory protein</fullName>
    </alternativeName>
    <alternativeName>
        <fullName evidence="10">Type VII secretion system protein EccCa1</fullName>
        <shortName evidence="10">T7SS protein EccCa1</shortName>
    </alternativeName>
</protein>
<keyword id="KW-0067">ATP-binding</keyword>
<keyword id="KW-0997">Cell inner membrane</keyword>
<keyword id="KW-1003">Cell membrane</keyword>
<keyword id="KW-0472">Membrane</keyword>
<keyword id="KW-0547">Nucleotide-binding</keyword>
<keyword id="KW-1185">Reference proteome</keyword>
<keyword id="KW-0812">Transmembrane</keyword>
<keyword id="KW-1133">Transmembrane helix</keyword>
<keyword id="KW-0813">Transport</keyword>
<proteinExistence type="evidence at protein level"/>
<reference key="1">
    <citation type="journal article" date="1998" name="Nature">
        <title>Deciphering the biology of Mycobacterium tuberculosis from the complete genome sequence.</title>
        <authorList>
            <person name="Cole S.T."/>
            <person name="Brosch R."/>
            <person name="Parkhill J."/>
            <person name="Garnier T."/>
            <person name="Churcher C.M."/>
            <person name="Harris D.E."/>
            <person name="Gordon S.V."/>
            <person name="Eiglmeier K."/>
            <person name="Gas S."/>
            <person name="Barry C.E. III"/>
            <person name="Tekaia F."/>
            <person name="Badcock K."/>
            <person name="Basham D."/>
            <person name="Brown D."/>
            <person name="Chillingworth T."/>
            <person name="Connor R."/>
            <person name="Davies R.M."/>
            <person name="Devlin K."/>
            <person name="Feltwell T."/>
            <person name="Gentles S."/>
            <person name="Hamlin N."/>
            <person name="Holroyd S."/>
            <person name="Hornsby T."/>
            <person name="Jagels K."/>
            <person name="Krogh A."/>
            <person name="McLean J."/>
            <person name="Moule S."/>
            <person name="Murphy L.D."/>
            <person name="Oliver S."/>
            <person name="Osborne J."/>
            <person name="Quail M.A."/>
            <person name="Rajandream M.A."/>
            <person name="Rogers J."/>
            <person name="Rutter S."/>
            <person name="Seeger K."/>
            <person name="Skelton S."/>
            <person name="Squares S."/>
            <person name="Squares R."/>
            <person name="Sulston J.E."/>
            <person name="Taylor K."/>
            <person name="Whitehead S."/>
            <person name="Barrell B.G."/>
        </authorList>
    </citation>
    <scope>NUCLEOTIDE SEQUENCE [LARGE SCALE GENOMIC DNA]</scope>
    <source>
        <strain>ATCC 25618 / H37Rv</strain>
    </source>
</reference>
<reference key="2">
    <citation type="journal article" date="2003" name="Proc. Natl. Acad. Sci. U.S.A.">
        <title>Acute infection and macrophage subversion by Mycobacterium tuberculosis require a specialized secretion system.</title>
        <authorList>
            <person name="Stanley S.A."/>
            <person name="Raghavan S."/>
            <person name="Hwang W.W."/>
            <person name="Cox J.S."/>
        </authorList>
    </citation>
    <scope>FUNCTION</scope>
    <scope>SUBUNIT</scope>
    <scope>INTERACTION WITH ECCCB1</scope>
    <scope>DISRUPTION PHENOTYPE</scope>
    <source>
        <strain>ATCC 35801 / TMC 107 / Erdman</strain>
    </source>
</reference>
<reference key="3">
    <citation type="journal article" date="2004" name="Mol. Microbiol.">
        <title>Individual RD1-region genes are required for export of ESAT-6/CFP-10 and for virulence of Mycobacterium tuberculosis.</title>
        <authorList>
            <person name="Guinn K.M."/>
            <person name="Hickey M.J."/>
            <person name="Mathur S.K."/>
            <person name="Zakel K.L."/>
            <person name="Grotzke J.E."/>
            <person name="Lewinsohn D.M."/>
            <person name="Smith S."/>
            <person name="Sherman D.R."/>
        </authorList>
    </citation>
    <scope>DISRUPTION PHENOTYPE</scope>
    <source>
        <strain>ATCC 25618 / H37Rv</strain>
    </source>
</reference>
<reference key="4">
    <citation type="journal article" date="2006" name="Infect. Immun.">
        <title>Dissection of ESAT-6 system 1 of Mycobacterium tuberculosis and impact on immunogenicity and virulence.</title>
        <authorList>
            <person name="Brodin P."/>
            <person name="Majlessi L."/>
            <person name="Marsollier L."/>
            <person name="de Jonge M.I."/>
            <person name="Bottai D."/>
            <person name="Demangel C."/>
            <person name="Hinds J."/>
            <person name="Neyrolles O."/>
            <person name="Butcher P.D."/>
            <person name="Leclerc C."/>
            <person name="Cole S.T."/>
            <person name="Brosch R."/>
        </authorList>
    </citation>
    <scope>FUNCTION</scope>
    <scope>SUBUNIT</scope>
    <scope>DISRUPTION PHENOTYPE</scope>
</reference>
<reference key="5">
    <citation type="journal article" date="2009" name="PLoS Pathog.">
        <title>Systematic genetic nomenclature for type VII secretion systems.</title>
        <authorList>
            <person name="Bitter W."/>
            <person name="Houben E.N."/>
            <person name="Bottai D."/>
            <person name="Brodin P."/>
            <person name="Brown E.J."/>
            <person name="Cox J.S."/>
            <person name="Derbyshire K."/>
            <person name="Fortune S.M."/>
            <person name="Gao L.Y."/>
            <person name="Liu J."/>
            <person name="Gey van Pittius N.C."/>
            <person name="Pym A.S."/>
            <person name="Rubin E.J."/>
            <person name="Sherman D.R."/>
            <person name="Cole S.T."/>
            <person name="Brosch R."/>
        </authorList>
    </citation>
    <scope>NOMENCLATURE</scope>
    <scope>SUBUNIT</scope>
</reference>
<reference key="6">
    <citation type="journal article" date="2010" name="J. Bacteriol.">
        <title>Conservation of structure and protein-protein interactions mediated by the secreted mycobacterial proteins EsxA, EsxB, and EspA.</title>
        <authorList>
            <person name="Callahan B."/>
            <person name="Nguyen K."/>
            <person name="Collins A."/>
            <person name="Valdes K."/>
            <person name="Caplow M."/>
            <person name="Crossman D.K."/>
            <person name="Steyn A.J."/>
            <person name="Eisele L."/>
            <person name="Derbyshire K.M."/>
        </authorList>
    </citation>
    <scope>SUBUNIT</scope>
    <source>
        <strain>ATCC 25618 / H37Rv</strain>
    </source>
</reference>
<reference key="7">
    <citation type="journal article" date="2011" name="Mol. Cell. Proteomics">
        <title>Proteogenomic analysis of Mycobacterium tuberculosis by high resolution mass spectrometry.</title>
        <authorList>
            <person name="Kelkar D.S."/>
            <person name="Kumar D."/>
            <person name="Kumar P."/>
            <person name="Balakrishnan L."/>
            <person name="Muthusamy B."/>
            <person name="Yadav A.K."/>
            <person name="Shrivastava P."/>
            <person name="Marimuthu A."/>
            <person name="Anand S."/>
            <person name="Sundaram H."/>
            <person name="Kingsbury R."/>
            <person name="Harsha H.C."/>
            <person name="Nair B."/>
            <person name="Prasad T.S."/>
            <person name="Chauhan D.S."/>
            <person name="Katoch K."/>
            <person name="Katoch V.M."/>
            <person name="Kumar P."/>
            <person name="Chaerkady R."/>
            <person name="Ramachandran S."/>
            <person name="Dash D."/>
            <person name="Pandey A."/>
        </authorList>
    </citation>
    <scope>IDENTIFICATION BY MASS SPECTROMETRY [LARGE SCALE ANALYSIS]</scope>
    <source>
        <strain>ATCC 25618 / H37Rv</strain>
    </source>
</reference>
<reference key="8">
    <citation type="journal article" date="2015" name="Cell">
        <title>Substrates control multimerization and activation of the multi-domain ATPase motor of type VII secretion.</title>
        <authorList>
            <person name="Rosenberg O.S."/>
            <person name="Dovala D."/>
            <person name="Li X."/>
            <person name="Connolly L."/>
            <person name="Bendebury A."/>
            <person name="Finer-Moore J."/>
            <person name="Holton J."/>
            <person name="Cheng Y."/>
            <person name="Stroud R.M."/>
            <person name="Cox J.S."/>
        </authorList>
    </citation>
    <scope>FUNCTION</scope>
    <scope>POSSIBLE ACTIVITY REGULATION</scope>
    <scope>MUTAGENESIS OF 35-PRO--GLY-92; 276-HIS--THR-401; LYS-485; ARG-543 AND ARG-623</scope>
</reference>
<accession>P9WNB3</accession>
<accession>L0TE12</accession>
<accession>O69735</accession>
<accession>Q7D4P6</accession>
<sequence length="747" mass="80913">MTTKKFTPTITRGPRLTPGEISLTPPDDLGIDIPPSGVQKILPYVMGGAMLGMIAIMVAGGTRQLSPYMLMMPLMMIVMMVGGLAGSTGGGGKKVPEINADRKEYLRYLAGLRTRVTSSATSQVAFFSYHAPHPEDLLSIVGTQRQWSRPANADFYAATRIGIGDQPAVDRLLKPAVGGELAAASAAPQPFLEPVSHMWVVKFLRTHGLIHDCPKLLQLRTFPTIAIGGDLAGAAGLMTAMICHLAVFHPPDLLQIRVLTEEPDDPDWSWLKWLPHVQHQTETDAAGSTRLIFTRQEGLSDLAARGPHAPDSLPGGPYVVVVDLTGGKAGFPPDGRAGVTVITLGNHRGSAYRIRVHEDGTADDRLPNQSFRQVTSVTDRMSPQQASRIARKLAGWSITGTILDKTSRVQKKVATDWHQLVGAQSVEEITPSRWRMYTDTDRDRLKIPFGHELKTGNVMYLDIKEGAEFGAGPHGMLIGTTGSGKSEFLRTLILSLVAMTHPDQVNLLLTDFKGGSTFLGMEKLPHTAAVVTNMAEEAELVSRMGEVLTGELDRRQSILRQAGMKVGAAGALSGVAEYEKYRERGADLPPLPTLFVVVDEFAELLQSHPDFIGLFDRICRVGRSLRVHLLLATQSLQTGGVRIDKLEPNLTYRIALRTTSSHESKAVIGTPEAQYITNKESGVGFLRVGMEDPVKFSTFYISGPYMPPAAGVETNGEAGGPGQQTTRQAARIHRFTAAPVLEEAPTP</sequence>
<feature type="chain" id="PRO_0000393428" description="ESX-1 secretion system protein EccCa1">
    <location>
        <begin position="1"/>
        <end position="747"/>
    </location>
</feature>
<feature type="transmembrane region" description="Helical" evidence="1">
    <location>
        <begin position="41"/>
        <end position="61"/>
    </location>
</feature>
<feature type="transmembrane region" description="Helical" evidence="1">
    <location>
        <begin position="65"/>
        <end position="85"/>
    </location>
</feature>
<feature type="transmembrane region" description="Helical" evidence="1">
    <location>
        <begin position="222"/>
        <end position="242"/>
    </location>
</feature>
<feature type="domain" description="FtsK" evidence="2">
    <location>
        <begin position="456"/>
        <end position="665"/>
    </location>
</feature>
<feature type="active site" evidence="12">
    <location>
        <position position="600"/>
    </location>
</feature>
<feature type="binding site" evidence="2">
    <location>
        <begin position="479"/>
        <end position="486"/>
    </location>
    <ligand>
        <name>ATP</name>
        <dbReference type="ChEBI" id="CHEBI:30616"/>
    </ligand>
</feature>
<feature type="mutagenesis site" description="Cells unable to export EsxB, missing transmembrane domain." evidence="7">
    <location>
        <begin position="33"/>
        <end position="92"/>
    </location>
</feature>
<feature type="mutagenesis site" description="Cells unable to export EsxB." evidence="7">
    <location>
        <begin position="276"/>
        <end position="401"/>
    </location>
</feature>
<feature type="mutagenesis site" description="Cells unable to export EsxB." evidence="7">
    <original>K</original>
    <variation>T</variation>
    <location>
        <position position="485"/>
    </location>
</feature>
<feature type="mutagenesis site" description="Decreased export of EsxB." evidence="7">
    <original>R</original>
    <variation>A</variation>
    <location>
        <position position="543"/>
    </location>
</feature>
<feature type="mutagenesis site" description="Cells unable to export EsxB." evidence="7">
    <original>R</original>
    <variation>A</variation>
    <location>
        <position position="623"/>
    </location>
</feature>
<gene>
    <name evidence="9" type="primary">eccCa1</name>
    <name evidence="8" type="synonym">snm1</name>
    <name type="ordered locus">Rv3870</name>
</gene>
<comment type="function">
    <text evidence="3 5">Part of the ESX-1 specialized secretion system, which delivers several virulence factors to host cells during infection, including the key virulence factors EsxA (ESAT-6) and EsxB (CFP-10).</text>
</comment>
<comment type="activity regulation">
    <text evidence="12">EsxB binding to the second FtsK domain of EccCb1 causes multimerization; a subsequent unknown step relieves the allosteric inhibition of linker 2 on FtsK domain 1 (this subunit), activating the ATPase activity (PubMed:25865481).</text>
</comment>
<comment type="subunit">
    <text evidence="3 5 6 11">Part of the ESX-1 / type VII secretion system (T7SS), which is composed of cytosolic and membrane components. The ESX-1 membrane complex is composed of EccB1, EccCa1, EccCb1, EccD1 and EccE1 (PubMed:14557536, PubMed:16368961, PubMed:19876390). Interacts with EccCb1 (PubMed:14557536). Residues 62-332 interact with EsxB and an artificial EsxB-EsxA heterodimer (PubMed:19854905).</text>
</comment>
<comment type="subcellular location">
    <subcellularLocation>
        <location evidence="10">Cell inner membrane</location>
        <topology evidence="1">Multi-pass membrane protein</topology>
    </subcellularLocation>
</comment>
<comment type="disruption phenotype">
    <text evidence="3 4 5">Disruption abolishes EsxA and EsxB secretion, but not their expression (PubMed:14557536). It results in a lack of antigen specific immunogenicity and leads to attenuated virulence (PubMed:16368961). Mutants exhibit defects in bacterial growth during the acute phase of a mouse infection (PubMed:14557536). No growth in the human macrophage-like cell line THP-1, no cytotoxicity; bacteria grow within cells but do not kill them and do not spread to other host cells (PubMed:14756778).</text>
</comment>
<comment type="miscellaneous">
    <text evidence="10">In ESX-1 cluster, the FtsK/SpoIIIE-like protein is split in two genes.</text>
</comment>
<evidence type="ECO:0000255" key="1"/>
<evidence type="ECO:0000255" key="2">
    <source>
        <dbReference type="PROSITE-ProRule" id="PRU00289"/>
    </source>
</evidence>
<evidence type="ECO:0000269" key="3">
    <source>
    </source>
</evidence>
<evidence type="ECO:0000269" key="4">
    <source>
    </source>
</evidence>
<evidence type="ECO:0000269" key="5">
    <source>
    </source>
</evidence>
<evidence type="ECO:0000269" key="6">
    <source>
    </source>
</evidence>
<evidence type="ECO:0000269" key="7">
    <source>
    </source>
</evidence>
<evidence type="ECO:0000303" key="8">
    <source>
    </source>
</evidence>
<evidence type="ECO:0000303" key="9">
    <source>
    </source>
</evidence>
<evidence type="ECO:0000305" key="10"/>
<evidence type="ECO:0000305" key="11">
    <source>
    </source>
</evidence>
<evidence type="ECO:0000305" key="12">
    <source>
    </source>
</evidence>